<sequence length="388" mass="42991">MRYLTSGESHGPQLTVIVEGIPANLEIKVEDINKEMFKRQGGYGRGRRMQIEKDTVEIVSGVRNGYTLGSPITMVVTNDDFTHWRKIMGAAPISEEERENMKRTITKPRPGHADLVGGMKYNHRDLRNVLERSSARETAARVAVGALCKVLLQQLDIDIYSRVVEIGGIKDKDFYDSETFKANLDRNDVRVIDDSIAQAMRDKIDEAKNEGDSIGGVVQVVVENMPVGVGSYVHYDRKLDGKIAQGVVSINAFKGVSFGEGFKAAEKPGSEIQDEILYNSEIGYYRGSNHLGGLEGGMSNGMPIIVNGVMKPIPTLYKPLNSVDINTKEDFKATIERSDSCAVPAASIVCEHVVAFEIAKALLEEFQSNHIEQLQQQIADRRQLNVEF</sequence>
<name>AROC_STAA1</name>
<feature type="chain" id="PRO_1000022559" description="Chorismate synthase">
    <location>
        <begin position="1"/>
        <end position="388"/>
    </location>
</feature>
<feature type="binding site" evidence="1">
    <location>
        <position position="39"/>
    </location>
    <ligand>
        <name>NADP(+)</name>
        <dbReference type="ChEBI" id="CHEBI:58349"/>
    </ligand>
</feature>
<feature type="binding site" evidence="1">
    <location>
        <position position="45"/>
    </location>
    <ligand>
        <name>NADP(+)</name>
        <dbReference type="ChEBI" id="CHEBI:58349"/>
    </ligand>
</feature>
<feature type="binding site" evidence="1">
    <location>
        <begin position="132"/>
        <end position="134"/>
    </location>
    <ligand>
        <name>FMN</name>
        <dbReference type="ChEBI" id="CHEBI:58210"/>
    </ligand>
</feature>
<feature type="binding site" evidence="1">
    <location>
        <begin position="251"/>
        <end position="252"/>
    </location>
    <ligand>
        <name>FMN</name>
        <dbReference type="ChEBI" id="CHEBI:58210"/>
    </ligand>
</feature>
<feature type="binding site" evidence="1">
    <location>
        <position position="296"/>
    </location>
    <ligand>
        <name>FMN</name>
        <dbReference type="ChEBI" id="CHEBI:58210"/>
    </ligand>
</feature>
<feature type="binding site" evidence="1">
    <location>
        <begin position="311"/>
        <end position="315"/>
    </location>
    <ligand>
        <name>FMN</name>
        <dbReference type="ChEBI" id="CHEBI:58210"/>
    </ligand>
</feature>
<feature type="binding site" evidence="1">
    <location>
        <position position="337"/>
    </location>
    <ligand>
        <name>FMN</name>
        <dbReference type="ChEBI" id="CHEBI:58210"/>
    </ligand>
</feature>
<reference key="1">
    <citation type="journal article" date="2008" name="Antimicrob. Agents Chemother.">
        <title>Mutated response regulator graR is responsible for phenotypic conversion of Staphylococcus aureus from heterogeneous vancomycin-intermediate resistance to vancomycin-intermediate resistance.</title>
        <authorList>
            <person name="Neoh H.-M."/>
            <person name="Cui L."/>
            <person name="Yuzawa H."/>
            <person name="Takeuchi F."/>
            <person name="Matsuo M."/>
            <person name="Hiramatsu K."/>
        </authorList>
    </citation>
    <scope>NUCLEOTIDE SEQUENCE [LARGE SCALE GENOMIC DNA]</scope>
    <source>
        <strain>Mu3 / ATCC 700698</strain>
    </source>
</reference>
<accession>A7X2G8</accession>
<proteinExistence type="inferred from homology"/>
<protein>
    <recommendedName>
        <fullName evidence="1">Chorismate synthase</fullName>
        <shortName evidence="1">CS</shortName>
        <ecNumber evidence="1">4.2.3.5</ecNumber>
    </recommendedName>
    <alternativeName>
        <fullName evidence="1">5-enolpyruvylshikimate-3-phosphate phospholyase</fullName>
    </alternativeName>
</protein>
<dbReference type="EC" id="4.2.3.5" evidence="1"/>
<dbReference type="EMBL" id="AP009324">
    <property type="protein sequence ID" value="BAF78337.1"/>
    <property type="molecule type" value="Genomic_DNA"/>
</dbReference>
<dbReference type="RefSeq" id="WP_001269921.1">
    <property type="nucleotide sequence ID" value="NC_009782.1"/>
</dbReference>
<dbReference type="SMR" id="A7X2G8"/>
<dbReference type="KEGG" id="saw:SAHV_1454"/>
<dbReference type="HOGENOM" id="CLU_034547_2_0_9"/>
<dbReference type="UniPathway" id="UPA00053">
    <property type="reaction ID" value="UER00090"/>
</dbReference>
<dbReference type="GO" id="GO:0005829">
    <property type="term" value="C:cytosol"/>
    <property type="evidence" value="ECO:0007669"/>
    <property type="project" value="TreeGrafter"/>
</dbReference>
<dbReference type="GO" id="GO:0004107">
    <property type="term" value="F:chorismate synthase activity"/>
    <property type="evidence" value="ECO:0007669"/>
    <property type="project" value="UniProtKB-UniRule"/>
</dbReference>
<dbReference type="GO" id="GO:0010181">
    <property type="term" value="F:FMN binding"/>
    <property type="evidence" value="ECO:0007669"/>
    <property type="project" value="TreeGrafter"/>
</dbReference>
<dbReference type="GO" id="GO:0008652">
    <property type="term" value="P:amino acid biosynthetic process"/>
    <property type="evidence" value="ECO:0007669"/>
    <property type="project" value="UniProtKB-KW"/>
</dbReference>
<dbReference type="GO" id="GO:0009073">
    <property type="term" value="P:aromatic amino acid family biosynthetic process"/>
    <property type="evidence" value="ECO:0007669"/>
    <property type="project" value="UniProtKB-KW"/>
</dbReference>
<dbReference type="GO" id="GO:0009423">
    <property type="term" value="P:chorismate biosynthetic process"/>
    <property type="evidence" value="ECO:0007669"/>
    <property type="project" value="UniProtKB-UniRule"/>
</dbReference>
<dbReference type="CDD" id="cd07304">
    <property type="entry name" value="Chorismate_synthase"/>
    <property type="match status" value="1"/>
</dbReference>
<dbReference type="FunFam" id="3.60.150.10:FF:000002">
    <property type="entry name" value="Chorismate synthase"/>
    <property type="match status" value="1"/>
</dbReference>
<dbReference type="Gene3D" id="3.60.150.10">
    <property type="entry name" value="Chorismate synthase AroC"/>
    <property type="match status" value="1"/>
</dbReference>
<dbReference type="HAMAP" id="MF_00300">
    <property type="entry name" value="Chorismate_synth"/>
    <property type="match status" value="1"/>
</dbReference>
<dbReference type="InterPro" id="IPR000453">
    <property type="entry name" value="Chorismate_synth"/>
</dbReference>
<dbReference type="InterPro" id="IPR035904">
    <property type="entry name" value="Chorismate_synth_AroC_sf"/>
</dbReference>
<dbReference type="InterPro" id="IPR020541">
    <property type="entry name" value="Chorismate_synthase_CS"/>
</dbReference>
<dbReference type="NCBIfam" id="TIGR00033">
    <property type="entry name" value="aroC"/>
    <property type="match status" value="1"/>
</dbReference>
<dbReference type="NCBIfam" id="NF003793">
    <property type="entry name" value="PRK05382.1"/>
    <property type="match status" value="1"/>
</dbReference>
<dbReference type="PANTHER" id="PTHR21085">
    <property type="entry name" value="CHORISMATE SYNTHASE"/>
    <property type="match status" value="1"/>
</dbReference>
<dbReference type="PANTHER" id="PTHR21085:SF0">
    <property type="entry name" value="CHORISMATE SYNTHASE"/>
    <property type="match status" value="1"/>
</dbReference>
<dbReference type="Pfam" id="PF01264">
    <property type="entry name" value="Chorismate_synt"/>
    <property type="match status" value="1"/>
</dbReference>
<dbReference type="PIRSF" id="PIRSF001456">
    <property type="entry name" value="Chorismate_synth"/>
    <property type="match status" value="1"/>
</dbReference>
<dbReference type="SUPFAM" id="SSF103263">
    <property type="entry name" value="Chorismate synthase, AroC"/>
    <property type="match status" value="1"/>
</dbReference>
<dbReference type="PROSITE" id="PS00787">
    <property type="entry name" value="CHORISMATE_SYNTHASE_1"/>
    <property type="match status" value="1"/>
</dbReference>
<dbReference type="PROSITE" id="PS00788">
    <property type="entry name" value="CHORISMATE_SYNTHASE_2"/>
    <property type="match status" value="1"/>
</dbReference>
<dbReference type="PROSITE" id="PS00789">
    <property type="entry name" value="CHORISMATE_SYNTHASE_3"/>
    <property type="match status" value="1"/>
</dbReference>
<comment type="function">
    <text evidence="1">Catalyzes the anti-1,4-elimination of the C-3 phosphate and the C-6 proR hydrogen from 5-enolpyruvylshikimate-3-phosphate (EPSP) to yield chorismate, which is the branch point compound that serves as the starting substrate for the three terminal pathways of aromatic amino acid biosynthesis. This reaction introduces a second double bond into the aromatic ring system.</text>
</comment>
<comment type="catalytic activity">
    <reaction evidence="1">
        <text>5-O-(1-carboxyvinyl)-3-phosphoshikimate = chorismate + phosphate</text>
        <dbReference type="Rhea" id="RHEA:21020"/>
        <dbReference type="ChEBI" id="CHEBI:29748"/>
        <dbReference type="ChEBI" id="CHEBI:43474"/>
        <dbReference type="ChEBI" id="CHEBI:57701"/>
        <dbReference type="EC" id="4.2.3.5"/>
    </reaction>
</comment>
<comment type="cofactor">
    <cofactor evidence="1">
        <name>FMNH2</name>
        <dbReference type="ChEBI" id="CHEBI:57618"/>
    </cofactor>
    <text evidence="1">Reduced FMN (FMNH(2)).</text>
</comment>
<comment type="pathway">
    <text evidence="1">Metabolic intermediate biosynthesis; chorismate biosynthesis; chorismate from D-erythrose 4-phosphate and phosphoenolpyruvate: step 7/7.</text>
</comment>
<comment type="subunit">
    <text evidence="1">Homotetramer.</text>
</comment>
<comment type="similarity">
    <text evidence="1">Belongs to the chorismate synthase family.</text>
</comment>
<organism>
    <name type="scientific">Staphylococcus aureus (strain Mu3 / ATCC 700698)</name>
    <dbReference type="NCBI Taxonomy" id="418127"/>
    <lineage>
        <taxon>Bacteria</taxon>
        <taxon>Bacillati</taxon>
        <taxon>Bacillota</taxon>
        <taxon>Bacilli</taxon>
        <taxon>Bacillales</taxon>
        <taxon>Staphylococcaceae</taxon>
        <taxon>Staphylococcus</taxon>
    </lineage>
</organism>
<evidence type="ECO:0000255" key="1">
    <source>
        <dbReference type="HAMAP-Rule" id="MF_00300"/>
    </source>
</evidence>
<gene>
    <name evidence="1" type="primary">aroC</name>
    <name type="ordered locus">SAHV_1454</name>
</gene>
<keyword id="KW-0028">Amino-acid biosynthesis</keyword>
<keyword id="KW-0057">Aromatic amino acid biosynthesis</keyword>
<keyword id="KW-0274">FAD</keyword>
<keyword id="KW-0285">Flavoprotein</keyword>
<keyword id="KW-0288">FMN</keyword>
<keyword id="KW-0456">Lyase</keyword>
<keyword id="KW-0521">NADP</keyword>